<organism>
    <name type="scientific">Yersinia pestis</name>
    <dbReference type="NCBI Taxonomy" id="632"/>
    <lineage>
        <taxon>Bacteria</taxon>
        <taxon>Pseudomonadati</taxon>
        <taxon>Pseudomonadota</taxon>
        <taxon>Gammaproteobacteria</taxon>
        <taxon>Enterobacterales</taxon>
        <taxon>Yersiniaceae</taxon>
        <taxon>Yersinia</taxon>
    </lineage>
</organism>
<sequence>MKNNDKLDSHTPMMQQYLRLKAQHPEILLFYRMGDFYELFYSDAKRASQLLDISLTKRGASAGEPIPMAGVPYHSIENYLAKLVQLGESAAICEQIGDPATSKGPVERKVVRIVTPGTISDEALLQERQDNLLAAIWQDAKGFGYATLDISSGRFRVAEPADLETMAAELQRTNPAELLYPENFEPMSLIEHRHGLRRRPLWEFELDTAKQQLNLQFGTRDLIGFGVEQAHLALRAAGCLLQYVKDTQRTSLPHIRGLTMERQQDGIIMDAATRRNLELTQNLSGGSENTLAAILDCSVTPMGSRMLKRWLHMPIRDIRVLTDRQQAIGGLQDIAAELQTPLRQVGDLERILARLALRTARPRDLARMRHAFQQLPEIHRLLQPIDVPHVQNLLSQVGQFDELQDLLERAIVETPPVLVRDGGVIASGYNAELDEWRALADGATDYLDRLEIREREKLGLDTLKVGFNGVHGYYIQVSRGQSHLVPIHYVRRQTLKNAERYIIPELKEYEDKVLTSKGKALAIEKGLYEEIFDLLLPHLPELQLSANALAELDVLANLAERAETLNYSCPTLSDKPGIKIMGGRHPVVEQVLKEPFISNPLTLSPQRRMLIITGPNMGGKSTYMRQTALIVLLAHLGSYVPADQATIGPIDRIFTRVGAADDLASGRSTFMVEMTETANILHNATEQSLVLMDEIGRGTSTYDGLSLAWACAENLASRIKAMTLFATHYFELTTLPEKMEGVVNVHLDALEHGETIAFMHSVQEGAASKSYGLAVAALAGVPRDVIKRARQKLKELESLSNNAAASTIDGSQMTLLNEEIPPAVEALEALDPDSLSPRQALEWIYRLKNMV</sequence>
<comment type="function">
    <text evidence="1">This protein is involved in the repair of mismatches in DNA. It is possible that it carries out the mismatch recognition step. This protein has a weak ATPase activity.</text>
</comment>
<comment type="similarity">
    <text evidence="1">Belongs to the DNA mismatch repair MutS family.</text>
</comment>
<accession>Q8ZBQ3</accession>
<accession>Q0WBU1</accession>
<feature type="chain" id="PRO_0000115174" description="DNA mismatch repair protein MutS">
    <location>
        <begin position="1"/>
        <end position="851"/>
    </location>
</feature>
<feature type="binding site" evidence="1">
    <location>
        <begin position="614"/>
        <end position="621"/>
    </location>
    <ligand>
        <name>ATP</name>
        <dbReference type="ChEBI" id="CHEBI:30616"/>
    </ligand>
</feature>
<protein>
    <recommendedName>
        <fullName evidence="1">DNA mismatch repair protein MutS</fullName>
    </recommendedName>
</protein>
<name>MUTS_YERPE</name>
<proteinExistence type="inferred from homology"/>
<gene>
    <name evidence="1" type="primary">mutS</name>
    <name type="ordered locus">YPO3354</name>
    <name type="ordered locus">y0835</name>
    <name type="ordered locus">YP_0333</name>
</gene>
<reference key="1">
    <citation type="journal article" date="2001" name="Nature">
        <title>Genome sequence of Yersinia pestis, the causative agent of plague.</title>
        <authorList>
            <person name="Parkhill J."/>
            <person name="Wren B.W."/>
            <person name="Thomson N.R."/>
            <person name="Titball R.W."/>
            <person name="Holden M.T.G."/>
            <person name="Prentice M.B."/>
            <person name="Sebaihia M."/>
            <person name="James K.D."/>
            <person name="Churcher C.M."/>
            <person name="Mungall K.L."/>
            <person name="Baker S."/>
            <person name="Basham D."/>
            <person name="Bentley S.D."/>
            <person name="Brooks K."/>
            <person name="Cerdeno-Tarraga A.-M."/>
            <person name="Chillingworth T."/>
            <person name="Cronin A."/>
            <person name="Davies R.M."/>
            <person name="Davis P."/>
            <person name="Dougan G."/>
            <person name="Feltwell T."/>
            <person name="Hamlin N."/>
            <person name="Holroyd S."/>
            <person name="Jagels K."/>
            <person name="Karlyshev A.V."/>
            <person name="Leather S."/>
            <person name="Moule S."/>
            <person name="Oyston P.C.F."/>
            <person name="Quail M.A."/>
            <person name="Rutherford K.M."/>
            <person name="Simmonds M."/>
            <person name="Skelton J."/>
            <person name="Stevens K."/>
            <person name="Whitehead S."/>
            <person name="Barrell B.G."/>
        </authorList>
    </citation>
    <scope>NUCLEOTIDE SEQUENCE [LARGE SCALE GENOMIC DNA]</scope>
    <source>
        <strain>CO-92 / Biovar Orientalis</strain>
    </source>
</reference>
<reference key="2">
    <citation type="journal article" date="2002" name="J. Bacteriol.">
        <title>Genome sequence of Yersinia pestis KIM.</title>
        <authorList>
            <person name="Deng W."/>
            <person name="Burland V."/>
            <person name="Plunkett G. III"/>
            <person name="Boutin A."/>
            <person name="Mayhew G.F."/>
            <person name="Liss P."/>
            <person name="Perna N.T."/>
            <person name="Rose D.J."/>
            <person name="Mau B."/>
            <person name="Zhou S."/>
            <person name="Schwartz D.C."/>
            <person name="Fetherston J.D."/>
            <person name="Lindler L.E."/>
            <person name="Brubaker R.R."/>
            <person name="Plano G.V."/>
            <person name="Straley S.C."/>
            <person name="McDonough K.A."/>
            <person name="Nilles M.L."/>
            <person name="Matson J.S."/>
            <person name="Blattner F.R."/>
            <person name="Perry R.D."/>
        </authorList>
    </citation>
    <scope>NUCLEOTIDE SEQUENCE [LARGE SCALE GENOMIC DNA]</scope>
    <source>
        <strain>KIM10+ / Biovar Mediaevalis</strain>
    </source>
</reference>
<reference key="3">
    <citation type="journal article" date="2004" name="DNA Res.">
        <title>Complete genome sequence of Yersinia pestis strain 91001, an isolate avirulent to humans.</title>
        <authorList>
            <person name="Song Y."/>
            <person name="Tong Z."/>
            <person name="Wang J."/>
            <person name="Wang L."/>
            <person name="Guo Z."/>
            <person name="Han Y."/>
            <person name="Zhang J."/>
            <person name="Pei D."/>
            <person name="Zhou D."/>
            <person name="Qin H."/>
            <person name="Pang X."/>
            <person name="Han Y."/>
            <person name="Zhai J."/>
            <person name="Li M."/>
            <person name="Cui B."/>
            <person name="Qi Z."/>
            <person name="Jin L."/>
            <person name="Dai R."/>
            <person name="Chen F."/>
            <person name="Li S."/>
            <person name="Ye C."/>
            <person name="Du Z."/>
            <person name="Lin W."/>
            <person name="Wang J."/>
            <person name="Yu J."/>
            <person name="Yang H."/>
            <person name="Wang J."/>
            <person name="Huang P."/>
            <person name="Yang R."/>
        </authorList>
    </citation>
    <scope>NUCLEOTIDE SEQUENCE [LARGE SCALE GENOMIC DNA]</scope>
    <source>
        <strain>91001 / Biovar Mediaevalis</strain>
    </source>
</reference>
<dbReference type="EMBL" id="AL590842">
    <property type="protein sequence ID" value="CAL21943.1"/>
    <property type="molecule type" value="Genomic_DNA"/>
</dbReference>
<dbReference type="EMBL" id="AE009952">
    <property type="protein sequence ID" value="AAM84420.1"/>
    <property type="molecule type" value="Genomic_DNA"/>
</dbReference>
<dbReference type="EMBL" id="AE017042">
    <property type="protein sequence ID" value="AAS60606.1"/>
    <property type="molecule type" value="Genomic_DNA"/>
</dbReference>
<dbReference type="PIR" id="AD0407">
    <property type="entry name" value="AD0407"/>
</dbReference>
<dbReference type="RefSeq" id="WP_002209399.1">
    <property type="nucleotide sequence ID" value="NZ_WUCM01000065.1"/>
</dbReference>
<dbReference type="RefSeq" id="YP_002348247.1">
    <property type="nucleotide sequence ID" value="NC_003143.1"/>
</dbReference>
<dbReference type="SMR" id="Q8ZBQ3"/>
<dbReference type="IntAct" id="Q8ZBQ3">
    <property type="interactions" value="2"/>
</dbReference>
<dbReference type="STRING" id="214092.YPO3354"/>
<dbReference type="PaxDb" id="214092-YPO3354"/>
<dbReference type="DNASU" id="1145782"/>
<dbReference type="EnsemblBacteria" id="AAS60606">
    <property type="protein sequence ID" value="AAS60606"/>
    <property type="gene ID" value="YP_0333"/>
</dbReference>
<dbReference type="GeneID" id="57975355"/>
<dbReference type="KEGG" id="ype:YPO3354"/>
<dbReference type="KEGG" id="ypk:y0835"/>
<dbReference type="KEGG" id="ypm:YP_0333"/>
<dbReference type="PATRIC" id="fig|1028802.3.peg.746"/>
<dbReference type="eggNOG" id="COG0249">
    <property type="taxonomic scope" value="Bacteria"/>
</dbReference>
<dbReference type="HOGENOM" id="CLU_002472_4_0_6"/>
<dbReference type="OMA" id="TPMMAQY"/>
<dbReference type="OrthoDB" id="9802448at2"/>
<dbReference type="Proteomes" id="UP000000815">
    <property type="component" value="Chromosome"/>
</dbReference>
<dbReference type="Proteomes" id="UP000001019">
    <property type="component" value="Chromosome"/>
</dbReference>
<dbReference type="Proteomes" id="UP000002490">
    <property type="component" value="Chromosome"/>
</dbReference>
<dbReference type="GO" id="GO:0005829">
    <property type="term" value="C:cytosol"/>
    <property type="evidence" value="ECO:0000318"/>
    <property type="project" value="GO_Central"/>
</dbReference>
<dbReference type="GO" id="GO:0005524">
    <property type="term" value="F:ATP binding"/>
    <property type="evidence" value="ECO:0007669"/>
    <property type="project" value="UniProtKB-UniRule"/>
</dbReference>
<dbReference type="GO" id="GO:0140664">
    <property type="term" value="F:ATP-dependent DNA damage sensor activity"/>
    <property type="evidence" value="ECO:0007669"/>
    <property type="project" value="InterPro"/>
</dbReference>
<dbReference type="GO" id="GO:0003684">
    <property type="term" value="F:damaged DNA binding"/>
    <property type="evidence" value="ECO:0007669"/>
    <property type="project" value="UniProtKB-UniRule"/>
</dbReference>
<dbReference type="GO" id="GO:0030983">
    <property type="term" value="F:mismatched DNA binding"/>
    <property type="evidence" value="ECO:0000318"/>
    <property type="project" value="GO_Central"/>
</dbReference>
<dbReference type="GO" id="GO:0006298">
    <property type="term" value="P:mismatch repair"/>
    <property type="evidence" value="ECO:0000318"/>
    <property type="project" value="GO_Central"/>
</dbReference>
<dbReference type="CDD" id="cd03284">
    <property type="entry name" value="ABC_MutS1"/>
    <property type="match status" value="1"/>
</dbReference>
<dbReference type="FunFam" id="1.10.1420.10:FF:000002">
    <property type="entry name" value="DNA mismatch repair protein MutS"/>
    <property type="match status" value="1"/>
</dbReference>
<dbReference type="FunFam" id="3.30.420.110:FF:000001">
    <property type="entry name" value="DNA mismatch repair protein MutS"/>
    <property type="match status" value="1"/>
</dbReference>
<dbReference type="FunFam" id="3.40.1170.10:FF:000001">
    <property type="entry name" value="DNA mismatch repair protein MutS"/>
    <property type="match status" value="1"/>
</dbReference>
<dbReference type="FunFam" id="3.40.50.300:FF:000283">
    <property type="entry name" value="DNA mismatch repair protein MutS"/>
    <property type="match status" value="1"/>
</dbReference>
<dbReference type="Gene3D" id="1.10.1420.10">
    <property type="match status" value="2"/>
</dbReference>
<dbReference type="Gene3D" id="6.10.140.430">
    <property type="match status" value="1"/>
</dbReference>
<dbReference type="Gene3D" id="3.40.1170.10">
    <property type="entry name" value="DNA repair protein MutS, domain I"/>
    <property type="match status" value="1"/>
</dbReference>
<dbReference type="Gene3D" id="3.30.420.110">
    <property type="entry name" value="MutS, connector domain"/>
    <property type="match status" value="1"/>
</dbReference>
<dbReference type="Gene3D" id="3.40.50.300">
    <property type="entry name" value="P-loop containing nucleotide triphosphate hydrolases"/>
    <property type="match status" value="1"/>
</dbReference>
<dbReference type="HAMAP" id="MF_00096">
    <property type="entry name" value="MutS"/>
    <property type="match status" value="1"/>
</dbReference>
<dbReference type="InterPro" id="IPR005748">
    <property type="entry name" value="DNA_mismatch_repair_MutS"/>
</dbReference>
<dbReference type="InterPro" id="IPR007695">
    <property type="entry name" value="DNA_mismatch_repair_MutS-lik_N"/>
</dbReference>
<dbReference type="InterPro" id="IPR017261">
    <property type="entry name" value="DNA_mismatch_repair_MutS/MSH"/>
</dbReference>
<dbReference type="InterPro" id="IPR000432">
    <property type="entry name" value="DNA_mismatch_repair_MutS_C"/>
</dbReference>
<dbReference type="InterPro" id="IPR007861">
    <property type="entry name" value="DNA_mismatch_repair_MutS_clamp"/>
</dbReference>
<dbReference type="InterPro" id="IPR007696">
    <property type="entry name" value="DNA_mismatch_repair_MutS_core"/>
</dbReference>
<dbReference type="InterPro" id="IPR016151">
    <property type="entry name" value="DNA_mismatch_repair_MutS_N"/>
</dbReference>
<dbReference type="InterPro" id="IPR036187">
    <property type="entry name" value="DNA_mismatch_repair_MutS_sf"/>
</dbReference>
<dbReference type="InterPro" id="IPR007860">
    <property type="entry name" value="DNA_mmatch_repair_MutS_con_dom"/>
</dbReference>
<dbReference type="InterPro" id="IPR045076">
    <property type="entry name" value="MutS"/>
</dbReference>
<dbReference type="InterPro" id="IPR036678">
    <property type="entry name" value="MutS_con_dom_sf"/>
</dbReference>
<dbReference type="InterPro" id="IPR027417">
    <property type="entry name" value="P-loop_NTPase"/>
</dbReference>
<dbReference type="NCBIfam" id="TIGR01070">
    <property type="entry name" value="mutS1"/>
    <property type="match status" value="1"/>
</dbReference>
<dbReference type="NCBIfam" id="NF003810">
    <property type="entry name" value="PRK05399.1"/>
    <property type="match status" value="1"/>
</dbReference>
<dbReference type="PANTHER" id="PTHR11361:SF34">
    <property type="entry name" value="DNA MISMATCH REPAIR PROTEIN MSH1, MITOCHONDRIAL"/>
    <property type="match status" value="1"/>
</dbReference>
<dbReference type="PANTHER" id="PTHR11361">
    <property type="entry name" value="DNA MISMATCH REPAIR PROTEIN MUTS FAMILY MEMBER"/>
    <property type="match status" value="1"/>
</dbReference>
<dbReference type="Pfam" id="PF01624">
    <property type="entry name" value="MutS_I"/>
    <property type="match status" value="1"/>
</dbReference>
<dbReference type="Pfam" id="PF05188">
    <property type="entry name" value="MutS_II"/>
    <property type="match status" value="1"/>
</dbReference>
<dbReference type="Pfam" id="PF05192">
    <property type="entry name" value="MutS_III"/>
    <property type="match status" value="1"/>
</dbReference>
<dbReference type="Pfam" id="PF05190">
    <property type="entry name" value="MutS_IV"/>
    <property type="match status" value="1"/>
</dbReference>
<dbReference type="Pfam" id="PF00488">
    <property type="entry name" value="MutS_V"/>
    <property type="match status" value="1"/>
</dbReference>
<dbReference type="PIRSF" id="PIRSF037677">
    <property type="entry name" value="DNA_mis_repair_Msh6"/>
    <property type="match status" value="1"/>
</dbReference>
<dbReference type="SMART" id="SM00534">
    <property type="entry name" value="MUTSac"/>
    <property type="match status" value="1"/>
</dbReference>
<dbReference type="SMART" id="SM00533">
    <property type="entry name" value="MUTSd"/>
    <property type="match status" value="1"/>
</dbReference>
<dbReference type="SUPFAM" id="SSF55271">
    <property type="entry name" value="DNA repair protein MutS, domain I"/>
    <property type="match status" value="1"/>
</dbReference>
<dbReference type="SUPFAM" id="SSF53150">
    <property type="entry name" value="DNA repair protein MutS, domain II"/>
    <property type="match status" value="1"/>
</dbReference>
<dbReference type="SUPFAM" id="SSF48334">
    <property type="entry name" value="DNA repair protein MutS, domain III"/>
    <property type="match status" value="1"/>
</dbReference>
<dbReference type="SUPFAM" id="SSF52540">
    <property type="entry name" value="P-loop containing nucleoside triphosphate hydrolases"/>
    <property type="match status" value="1"/>
</dbReference>
<dbReference type="PROSITE" id="PS00486">
    <property type="entry name" value="DNA_MISMATCH_REPAIR_2"/>
    <property type="match status" value="1"/>
</dbReference>
<evidence type="ECO:0000255" key="1">
    <source>
        <dbReference type="HAMAP-Rule" id="MF_00096"/>
    </source>
</evidence>
<keyword id="KW-0067">ATP-binding</keyword>
<keyword id="KW-0227">DNA damage</keyword>
<keyword id="KW-0234">DNA repair</keyword>
<keyword id="KW-0238">DNA-binding</keyword>
<keyword id="KW-0547">Nucleotide-binding</keyword>
<keyword id="KW-1185">Reference proteome</keyword>